<sequence>MAQLIDGKKLAEDVVSTVKTETEKLVAATGVVPGIAVVIVGEDPASQVYVASKSRKAKECGFHSVQHDLPETASEQELLNLIEGLNNDPAIHGILVQLPLPGHIDSGRVIQTIAPEKDVDGFHFINVGKLGTGEVETAFVPCTPAGAMIMIERVHGRDLSGLNAVVIGRSNIVGKPMFNLLLAANATVTVAHSRTKDLPAIARNADILVAAVGRPQMVKGDWVKPGATVIDVGINRIPAPERGEGKTRLVGDVDFAEAEKVAGAITPVPGGVGPMTIAMLMANTLTAACRSAGMKKPVF</sequence>
<dbReference type="EC" id="1.5.1.5" evidence="1"/>
<dbReference type="EC" id="3.5.4.9" evidence="1"/>
<dbReference type="EMBL" id="CP000873">
    <property type="protein sequence ID" value="ABX63954.1"/>
    <property type="molecule type" value="Genomic_DNA"/>
</dbReference>
<dbReference type="RefSeq" id="WP_002967255.1">
    <property type="nucleotide sequence ID" value="NC_010104.1"/>
</dbReference>
<dbReference type="SMR" id="A9MC67"/>
<dbReference type="GeneID" id="97535127"/>
<dbReference type="KEGG" id="bcs:BCAN_B0794"/>
<dbReference type="HOGENOM" id="CLU_034045_1_2_5"/>
<dbReference type="UniPathway" id="UPA00193"/>
<dbReference type="Proteomes" id="UP000001385">
    <property type="component" value="Chromosome II"/>
</dbReference>
<dbReference type="GO" id="GO:0005829">
    <property type="term" value="C:cytosol"/>
    <property type="evidence" value="ECO:0007669"/>
    <property type="project" value="TreeGrafter"/>
</dbReference>
<dbReference type="GO" id="GO:0004477">
    <property type="term" value="F:methenyltetrahydrofolate cyclohydrolase activity"/>
    <property type="evidence" value="ECO:0007669"/>
    <property type="project" value="UniProtKB-UniRule"/>
</dbReference>
<dbReference type="GO" id="GO:0004488">
    <property type="term" value="F:methylenetetrahydrofolate dehydrogenase (NADP+) activity"/>
    <property type="evidence" value="ECO:0007669"/>
    <property type="project" value="UniProtKB-UniRule"/>
</dbReference>
<dbReference type="GO" id="GO:0000105">
    <property type="term" value="P:L-histidine biosynthetic process"/>
    <property type="evidence" value="ECO:0007669"/>
    <property type="project" value="UniProtKB-KW"/>
</dbReference>
<dbReference type="GO" id="GO:0009086">
    <property type="term" value="P:methionine biosynthetic process"/>
    <property type="evidence" value="ECO:0007669"/>
    <property type="project" value="UniProtKB-KW"/>
</dbReference>
<dbReference type="GO" id="GO:0006164">
    <property type="term" value="P:purine nucleotide biosynthetic process"/>
    <property type="evidence" value="ECO:0007669"/>
    <property type="project" value="UniProtKB-KW"/>
</dbReference>
<dbReference type="GO" id="GO:0035999">
    <property type="term" value="P:tetrahydrofolate interconversion"/>
    <property type="evidence" value="ECO:0007669"/>
    <property type="project" value="UniProtKB-UniRule"/>
</dbReference>
<dbReference type="CDD" id="cd01080">
    <property type="entry name" value="NAD_bind_m-THF_DH_Cyclohyd"/>
    <property type="match status" value="1"/>
</dbReference>
<dbReference type="FunFam" id="3.40.50.720:FF:000006">
    <property type="entry name" value="Bifunctional protein FolD"/>
    <property type="match status" value="1"/>
</dbReference>
<dbReference type="FunFam" id="3.40.50.10860:FF:000005">
    <property type="entry name" value="C-1-tetrahydrofolate synthase, cytoplasmic, putative"/>
    <property type="match status" value="1"/>
</dbReference>
<dbReference type="Gene3D" id="3.40.50.10860">
    <property type="entry name" value="Leucine Dehydrogenase, chain A, domain 1"/>
    <property type="match status" value="1"/>
</dbReference>
<dbReference type="Gene3D" id="3.40.50.720">
    <property type="entry name" value="NAD(P)-binding Rossmann-like Domain"/>
    <property type="match status" value="1"/>
</dbReference>
<dbReference type="HAMAP" id="MF_01576">
    <property type="entry name" value="THF_DHG_CYH"/>
    <property type="match status" value="1"/>
</dbReference>
<dbReference type="InterPro" id="IPR046346">
    <property type="entry name" value="Aminoacid_DH-like_N_sf"/>
</dbReference>
<dbReference type="InterPro" id="IPR036291">
    <property type="entry name" value="NAD(P)-bd_dom_sf"/>
</dbReference>
<dbReference type="InterPro" id="IPR000672">
    <property type="entry name" value="THF_DH/CycHdrlase"/>
</dbReference>
<dbReference type="InterPro" id="IPR020630">
    <property type="entry name" value="THF_DH/CycHdrlase_cat_dom"/>
</dbReference>
<dbReference type="InterPro" id="IPR020867">
    <property type="entry name" value="THF_DH/CycHdrlase_CS"/>
</dbReference>
<dbReference type="InterPro" id="IPR020631">
    <property type="entry name" value="THF_DH/CycHdrlase_NAD-bd_dom"/>
</dbReference>
<dbReference type="NCBIfam" id="NF008058">
    <property type="entry name" value="PRK10792.1"/>
    <property type="match status" value="1"/>
</dbReference>
<dbReference type="NCBIfam" id="NF010783">
    <property type="entry name" value="PRK14186.1"/>
    <property type="match status" value="1"/>
</dbReference>
<dbReference type="NCBIfam" id="NF010785">
    <property type="entry name" value="PRK14188.1"/>
    <property type="match status" value="1"/>
</dbReference>
<dbReference type="PANTHER" id="PTHR48099:SF5">
    <property type="entry name" value="C-1-TETRAHYDROFOLATE SYNTHASE, CYTOPLASMIC"/>
    <property type="match status" value="1"/>
</dbReference>
<dbReference type="PANTHER" id="PTHR48099">
    <property type="entry name" value="C-1-TETRAHYDROFOLATE SYNTHASE, CYTOPLASMIC-RELATED"/>
    <property type="match status" value="1"/>
</dbReference>
<dbReference type="Pfam" id="PF00763">
    <property type="entry name" value="THF_DHG_CYH"/>
    <property type="match status" value="1"/>
</dbReference>
<dbReference type="Pfam" id="PF02882">
    <property type="entry name" value="THF_DHG_CYH_C"/>
    <property type="match status" value="1"/>
</dbReference>
<dbReference type="PRINTS" id="PR00085">
    <property type="entry name" value="THFDHDRGNASE"/>
</dbReference>
<dbReference type="SUPFAM" id="SSF53223">
    <property type="entry name" value="Aminoacid dehydrogenase-like, N-terminal domain"/>
    <property type="match status" value="1"/>
</dbReference>
<dbReference type="SUPFAM" id="SSF51735">
    <property type="entry name" value="NAD(P)-binding Rossmann-fold domains"/>
    <property type="match status" value="1"/>
</dbReference>
<dbReference type="PROSITE" id="PS00766">
    <property type="entry name" value="THF_DHG_CYH_1"/>
    <property type="match status" value="1"/>
</dbReference>
<dbReference type="PROSITE" id="PS00767">
    <property type="entry name" value="THF_DHG_CYH_2"/>
    <property type="match status" value="1"/>
</dbReference>
<comment type="function">
    <text evidence="1">Catalyzes the oxidation of 5,10-methylenetetrahydrofolate to 5,10-methenyltetrahydrofolate and then the hydrolysis of 5,10-methenyltetrahydrofolate to 10-formyltetrahydrofolate.</text>
</comment>
<comment type="catalytic activity">
    <reaction evidence="1">
        <text>(6R)-5,10-methylene-5,6,7,8-tetrahydrofolate + NADP(+) = (6R)-5,10-methenyltetrahydrofolate + NADPH</text>
        <dbReference type="Rhea" id="RHEA:22812"/>
        <dbReference type="ChEBI" id="CHEBI:15636"/>
        <dbReference type="ChEBI" id="CHEBI:57455"/>
        <dbReference type="ChEBI" id="CHEBI:57783"/>
        <dbReference type="ChEBI" id="CHEBI:58349"/>
        <dbReference type="EC" id="1.5.1.5"/>
    </reaction>
</comment>
<comment type="catalytic activity">
    <reaction evidence="1">
        <text>(6R)-5,10-methenyltetrahydrofolate + H2O = (6R)-10-formyltetrahydrofolate + H(+)</text>
        <dbReference type="Rhea" id="RHEA:23700"/>
        <dbReference type="ChEBI" id="CHEBI:15377"/>
        <dbReference type="ChEBI" id="CHEBI:15378"/>
        <dbReference type="ChEBI" id="CHEBI:57455"/>
        <dbReference type="ChEBI" id="CHEBI:195366"/>
        <dbReference type="EC" id="3.5.4.9"/>
    </reaction>
</comment>
<comment type="pathway">
    <text evidence="1">One-carbon metabolism; tetrahydrofolate interconversion.</text>
</comment>
<comment type="subunit">
    <text evidence="1">Homodimer.</text>
</comment>
<comment type="similarity">
    <text evidence="1">Belongs to the tetrahydrofolate dehydrogenase/cyclohydrolase family.</text>
</comment>
<evidence type="ECO:0000255" key="1">
    <source>
        <dbReference type="HAMAP-Rule" id="MF_01576"/>
    </source>
</evidence>
<proteinExistence type="inferred from homology"/>
<organism>
    <name type="scientific">Brucella canis (strain ATCC 23365 / NCTC 10854 / RM-666)</name>
    <dbReference type="NCBI Taxonomy" id="483179"/>
    <lineage>
        <taxon>Bacteria</taxon>
        <taxon>Pseudomonadati</taxon>
        <taxon>Pseudomonadota</taxon>
        <taxon>Alphaproteobacteria</taxon>
        <taxon>Hyphomicrobiales</taxon>
        <taxon>Brucellaceae</taxon>
        <taxon>Brucella/Ochrobactrum group</taxon>
        <taxon>Brucella</taxon>
    </lineage>
</organism>
<protein>
    <recommendedName>
        <fullName evidence="1">Bifunctional protein FolD</fullName>
    </recommendedName>
    <domain>
        <recommendedName>
            <fullName evidence="1">Methylenetetrahydrofolate dehydrogenase</fullName>
            <ecNumber evidence="1">1.5.1.5</ecNumber>
        </recommendedName>
    </domain>
    <domain>
        <recommendedName>
            <fullName evidence="1">Methenyltetrahydrofolate cyclohydrolase</fullName>
            <ecNumber evidence="1">3.5.4.9</ecNumber>
        </recommendedName>
    </domain>
</protein>
<reference key="1">
    <citation type="submission" date="2007-10" db="EMBL/GenBank/DDBJ databases">
        <title>Brucella canis ATCC 23365 whole genome shotgun sequencing project.</title>
        <authorList>
            <person name="Setubal J.C."/>
            <person name="Bowns C."/>
            <person name="Boyle S."/>
            <person name="Crasta O.R."/>
            <person name="Czar M.J."/>
            <person name="Dharmanolla C."/>
            <person name="Gillespie J.J."/>
            <person name="Kenyon R.W."/>
            <person name="Lu J."/>
            <person name="Mane S."/>
            <person name="Mohapatra S."/>
            <person name="Nagrani S."/>
            <person name="Purkayastha A."/>
            <person name="Rajasimha H.K."/>
            <person name="Shallom J.M."/>
            <person name="Shallom S."/>
            <person name="Shukla M."/>
            <person name="Snyder E.E."/>
            <person name="Sobral B.W."/>
            <person name="Wattam A.R."/>
            <person name="Will R."/>
            <person name="Williams K."/>
            <person name="Yoo H."/>
            <person name="Bruce D."/>
            <person name="Detter C."/>
            <person name="Munk C."/>
            <person name="Brettin T.S."/>
        </authorList>
    </citation>
    <scope>NUCLEOTIDE SEQUENCE [LARGE SCALE GENOMIC DNA]</scope>
    <source>
        <strain>ATCC 23365 / NCTC 10854 / RM-666</strain>
    </source>
</reference>
<gene>
    <name evidence="1" type="primary">folD</name>
    <name type="ordered locus">BCAN_B0794</name>
</gene>
<keyword id="KW-0028">Amino-acid biosynthesis</keyword>
<keyword id="KW-0368">Histidine biosynthesis</keyword>
<keyword id="KW-0378">Hydrolase</keyword>
<keyword id="KW-0486">Methionine biosynthesis</keyword>
<keyword id="KW-0511">Multifunctional enzyme</keyword>
<keyword id="KW-0521">NADP</keyword>
<keyword id="KW-0554">One-carbon metabolism</keyword>
<keyword id="KW-0560">Oxidoreductase</keyword>
<keyword id="KW-0658">Purine biosynthesis</keyword>
<keyword id="KW-1185">Reference proteome</keyword>
<feature type="chain" id="PRO_1000087890" description="Bifunctional protein FolD">
    <location>
        <begin position="1"/>
        <end position="299"/>
    </location>
</feature>
<feature type="binding site" evidence="1">
    <location>
        <begin position="168"/>
        <end position="170"/>
    </location>
    <ligand>
        <name>NADP(+)</name>
        <dbReference type="ChEBI" id="CHEBI:58349"/>
    </ligand>
</feature>
<feature type="binding site" evidence="1">
    <location>
        <position position="193"/>
    </location>
    <ligand>
        <name>NADP(+)</name>
        <dbReference type="ChEBI" id="CHEBI:58349"/>
    </ligand>
</feature>
<feature type="binding site" evidence="1">
    <location>
        <position position="234"/>
    </location>
    <ligand>
        <name>NADP(+)</name>
        <dbReference type="ChEBI" id="CHEBI:58349"/>
    </ligand>
</feature>
<name>FOLD_BRUC2</name>
<accession>A9MC67</accession>